<dbReference type="EMBL" id="U41845">
    <property type="protein sequence ID" value="AAC53278.2"/>
    <property type="molecule type" value="mRNA"/>
</dbReference>
<dbReference type="EMBL" id="BC097337">
    <property type="protein sequence ID" value="AAH97337.1"/>
    <property type="molecule type" value="mRNA"/>
</dbReference>
<dbReference type="RefSeq" id="NP_037123.1">
    <property type="nucleotide sequence ID" value="NM_012991.1"/>
</dbReference>
<dbReference type="SMR" id="O08587"/>
<dbReference type="BioGRID" id="247530">
    <property type="interactions" value="1"/>
</dbReference>
<dbReference type="CORUM" id="O08587"/>
<dbReference type="FunCoup" id="O08587">
    <property type="interactions" value="3201"/>
</dbReference>
<dbReference type="STRING" id="10116.ENSRNOP00000018155"/>
<dbReference type="iPTMnet" id="O08587"/>
<dbReference type="PhosphoSitePlus" id="O08587"/>
<dbReference type="jPOST" id="O08587"/>
<dbReference type="PaxDb" id="10116-ENSRNOP00000018155"/>
<dbReference type="GeneID" id="25497"/>
<dbReference type="KEGG" id="rno:25497"/>
<dbReference type="AGR" id="RGD:3191"/>
<dbReference type="CTD" id="10762"/>
<dbReference type="RGD" id="3191">
    <property type="gene designation" value="Nup50"/>
</dbReference>
<dbReference type="eggNOG" id="KOG2724">
    <property type="taxonomic scope" value="Eukaryota"/>
</dbReference>
<dbReference type="InParanoid" id="O08587"/>
<dbReference type="PhylomeDB" id="O08587"/>
<dbReference type="Reactome" id="R-RNO-159227">
    <property type="pathway name" value="Transport of the SLBP independent Mature mRNA"/>
</dbReference>
<dbReference type="Reactome" id="R-RNO-159230">
    <property type="pathway name" value="Transport of the SLBP Dependant Mature mRNA"/>
</dbReference>
<dbReference type="Reactome" id="R-RNO-159231">
    <property type="pathway name" value="Transport of Mature mRNA Derived from an Intronless Transcript"/>
</dbReference>
<dbReference type="Reactome" id="R-RNO-159236">
    <property type="pathway name" value="Transport of Mature mRNA derived from an Intron-Containing Transcript"/>
</dbReference>
<dbReference type="Reactome" id="R-RNO-170822">
    <property type="pathway name" value="Regulation of Glucokinase by Glucokinase Regulatory Protein"/>
</dbReference>
<dbReference type="Reactome" id="R-RNO-191859">
    <property type="pathway name" value="snRNP Assembly"/>
</dbReference>
<dbReference type="Reactome" id="R-RNO-3108214">
    <property type="pathway name" value="SUMOylation of DNA damage response and repair proteins"/>
</dbReference>
<dbReference type="Reactome" id="R-RNO-3232142">
    <property type="pathway name" value="SUMOylation of ubiquitinylation proteins"/>
</dbReference>
<dbReference type="Reactome" id="R-RNO-3301854">
    <property type="pathway name" value="Nuclear Pore Complex (NPC) Disassembly"/>
</dbReference>
<dbReference type="Reactome" id="R-RNO-3371453">
    <property type="pathway name" value="Regulation of HSF1-mediated heat shock response"/>
</dbReference>
<dbReference type="Reactome" id="R-RNO-4085377">
    <property type="pathway name" value="SUMOylation of SUMOylation proteins"/>
</dbReference>
<dbReference type="Reactome" id="R-RNO-4551638">
    <property type="pathway name" value="SUMOylation of chromatin organization proteins"/>
</dbReference>
<dbReference type="Reactome" id="R-RNO-4570464">
    <property type="pathway name" value="SUMOylation of RNA binding proteins"/>
</dbReference>
<dbReference type="Reactome" id="R-RNO-4615885">
    <property type="pathway name" value="SUMOylation of DNA replication proteins"/>
</dbReference>
<dbReference type="Reactome" id="R-RNO-5578749">
    <property type="pathway name" value="Transcriptional regulation by small RNAs"/>
</dbReference>
<dbReference type="PRO" id="PR:O08587"/>
<dbReference type="Proteomes" id="UP000002494">
    <property type="component" value="Unplaced"/>
</dbReference>
<dbReference type="GO" id="GO:0005635">
    <property type="term" value="C:nuclear envelope"/>
    <property type="evidence" value="ECO:0000266"/>
    <property type="project" value="RGD"/>
</dbReference>
<dbReference type="GO" id="GO:0031965">
    <property type="term" value="C:nuclear membrane"/>
    <property type="evidence" value="ECO:0000250"/>
    <property type="project" value="UniProtKB"/>
</dbReference>
<dbReference type="GO" id="GO:0005643">
    <property type="term" value="C:nuclear pore"/>
    <property type="evidence" value="ECO:0000314"/>
    <property type="project" value="RGD"/>
</dbReference>
<dbReference type="GO" id="GO:0051028">
    <property type="term" value="P:mRNA transport"/>
    <property type="evidence" value="ECO:0007669"/>
    <property type="project" value="UniProtKB-KW"/>
</dbReference>
<dbReference type="GO" id="GO:0001841">
    <property type="term" value="P:neural tube formation"/>
    <property type="evidence" value="ECO:0000266"/>
    <property type="project" value="RGD"/>
</dbReference>
<dbReference type="GO" id="GO:0006606">
    <property type="term" value="P:protein import into nucleus"/>
    <property type="evidence" value="ECO:0000318"/>
    <property type="project" value="GO_Central"/>
</dbReference>
<dbReference type="CDD" id="cd13170">
    <property type="entry name" value="RanBD_NUP50"/>
    <property type="match status" value="1"/>
</dbReference>
<dbReference type="FunFam" id="2.30.29.30:FF:000179">
    <property type="entry name" value="Nuclear pore complex protein Nup50"/>
    <property type="match status" value="1"/>
</dbReference>
<dbReference type="Gene3D" id="2.30.29.30">
    <property type="entry name" value="Pleckstrin-homology domain (PH domain)/Phosphotyrosine-binding domain (PTB)"/>
    <property type="match status" value="1"/>
</dbReference>
<dbReference type="InterPro" id="IPR015007">
    <property type="entry name" value="NUP2/50/61"/>
</dbReference>
<dbReference type="InterPro" id="IPR011993">
    <property type="entry name" value="PH-like_dom_sf"/>
</dbReference>
<dbReference type="InterPro" id="IPR000156">
    <property type="entry name" value="Ran_bind_dom"/>
</dbReference>
<dbReference type="InterPro" id="IPR045255">
    <property type="entry name" value="RanBP1-like"/>
</dbReference>
<dbReference type="PANTHER" id="PTHR23138:SF147">
    <property type="entry name" value="NUCLEAR PORE COMPLEX PROTEIN NUP50"/>
    <property type="match status" value="1"/>
</dbReference>
<dbReference type="PANTHER" id="PTHR23138">
    <property type="entry name" value="RAN BINDING PROTEIN"/>
    <property type="match status" value="1"/>
</dbReference>
<dbReference type="Pfam" id="PF08911">
    <property type="entry name" value="NUP50"/>
    <property type="match status" value="1"/>
</dbReference>
<dbReference type="Pfam" id="PF00638">
    <property type="entry name" value="Ran_BP1"/>
    <property type="match status" value="1"/>
</dbReference>
<dbReference type="SMART" id="SM00160">
    <property type="entry name" value="RanBD"/>
    <property type="match status" value="1"/>
</dbReference>
<dbReference type="SUPFAM" id="SSF50729">
    <property type="entry name" value="PH domain-like"/>
    <property type="match status" value="1"/>
</dbReference>
<dbReference type="PROSITE" id="PS50196">
    <property type="entry name" value="RANBD1"/>
    <property type="match status" value="1"/>
</dbReference>
<name>NUP50_RAT</name>
<proteinExistence type="evidence at transcript level"/>
<reference key="1">
    <citation type="journal article" date="1997" name="Genomics">
        <title>cDNA cloning and characterization of Npap60: a novel rat nuclear pore-associated protein with an unusual subcellular localization during male germ cell differentiation.</title>
        <authorList>
            <person name="Fan F."/>
            <person name="Liu C.-P."/>
            <person name="Korobova O."/>
            <person name="Heyting C."/>
            <person name="Offenberg H.H."/>
            <person name="Trump G."/>
            <person name="Arnheim N."/>
        </authorList>
    </citation>
    <scope>NUCLEOTIDE SEQUENCE [MRNA]</scope>
    <scope>SUBCELLULAR LOCATION</scope>
    <source>
        <strain>Sprague-Dawley</strain>
        <tissue>Testis</tissue>
    </source>
</reference>
<reference key="2">
    <citation type="journal article" date="2004" name="Genome Res.">
        <title>The status, quality, and expansion of the NIH full-length cDNA project: the Mammalian Gene Collection (MGC).</title>
        <authorList>
            <consortium name="The MGC Project Team"/>
        </authorList>
    </citation>
    <scope>NUCLEOTIDE SEQUENCE [LARGE SCALE MRNA]</scope>
    <source>
        <tissue>Testis</tissue>
    </source>
</reference>
<reference key="3">
    <citation type="journal article" date="2000" name="Mol. Cell. Biol.">
        <title>Nup50, a nucleoplasmically oriented nucleoporin with a role in nuclear protein export.</title>
        <authorList>
            <person name="Guan T."/>
            <person name="Kehlenbach R.H."/>
            <person name="Schirmer E.C."/>
            <person name="Kehlenbach A."/>
            <person name="Fan F."/>
            <person name="Clurman B.E."/>
            <person name="Arnheim N."/>
            <person name="Gerace L."/>
        </authorList>
    </citation>
    <scope>IDENTIFICATION OF FRAMESHIFT</scope>
    <scope>SUBCELLULAR LOCATION</scope>
    <source>
        <strain>Sprague-Dawley</strain>
    </source>
</reference>
<evidence type="ECO:0000250" key="1"/>
<evidence type="ECO:0000250" key="2">
    <source>
        <dbReference type="UniProtKB" id="Q9JIH2"/>
    </source>
</evidence>
<evidence type="ECO:0000250" key="3">
    <source>
        <dbReference type="UniProtKB" id="Q9UKX7"/>
    </source>
</evidence>
<evidence type="ECO:0000255" key="4">
    <source>
        <dbReference type="PROSITE-ProRule" id="PRU00164"/>
    </source>
</evidence>
<evidence type="ECO:0000256" key="5">
    <source>
        <dbReference type="SAM" id="MobiDB-lite"/>
    </source>
</evidence>
<evidence type="ECO:0000269" key="6">
    <source>
    </source>
</evidence>
<evidence type="ECO:0000269" key="7">
    <source>
    </source>
</evidence>
<evidence type="ECO:0000305" key="8"/>
<organism>
    <name type="scientific">Rattus norvegicus</name>
    <name type="common">Rat</name>
    <dbReference type="NCBI Taxonomy" id="10116"/>
    <lineage>
        <taxon>Eukaryota</taxon>
        <taxon>Metazoa</taxon>
        <taxon>Chordata</taxon>
        <taxon>Craniata</taxon>
        <taxon>Vertebrata</taxon>
        <taxon>Euteleostomi</taxon>
        <taxon>Mammalia</taxon>
        <taxon>Eutheria</taxon>
        <taxon>Euarchontoglires</taxon>
        <taxon>Glires</taxon>
        <taxon>Rodentia</taxon>
        <taxon>Myomorpha</taxon>
        <taxon>Muroidea</taxon>
        <taxon>Muridae</taxon>
        <taxon>Murinae</taxon>
        <taxon>Rattus</taxon>
    </lineage>
</organism>
<feature type="chain" id="PRO_0000204870" description="Nuclear pore complex protein Nup50">
    <location>
        <begin position="1"/>
        <end position="467"/>
    </location>
</feature>
<feature type="repeat" description="1">
    <location>
        <begin position="76"/>
        <end position="77"/>
    </location>
</feature>
<feature type="repeat" description="2">
    <location>
        <begin position="113"/>
        <end position="114"/>
    </location>
</feature>
<feature type="repeat" description="3">
    <location>
        <begin position="226"/>
        <end position="227"/>
    </location>
</feature>
<feature type="repeat" description="4">
    <location>
        <begin position="272"/>
        <end position="273"/>
    </location>
</feature>
<feature type="repeat" description="5">
    <location>
        <begin position="302"/>
        <end position="303"/>
    </location>
</feature>
<feature type="domain" description="RanBD1" evidence="4">
    <location>
        <begin position="334"/>
        <end position="467"/>
    </location>
</feature>
<feature type="region of interest" description="Disordered" evidence="5">
    <location>
        <begin position="1"/>
        <end position="20"/>
    </location>
</feature>
<feature type="region of interest" description="5 X 2 AA repeats of F-G">
    <location>
        <begin position="76"/>
        <end position="303"/>
    </location>
</feature>
<feature type="region of interest" description="Disordered" evidence="5">
    <location>
        <begin position="84"/>
        <end position="103"/>
    </location>
</feature>
<feature type="region of interest" description="Disordered" evidence="5">
    <location>
        <begin position="129"/>
        <end position="151"/>
    </location>
</feature>
<feature type="region of interest" description="Binding to CDKN1B" evidence="1">
    <location>
        <begin position="144"/>
        <end position="206"/>
    </location>
</feature>
<feature type="region of interest" description="Disordered" evidence="5">
    <location>
        <begin position="201"/>
        <end position="248"/>
    </location>
</feature>
<feature type="region of interest" description="Disordered" evidence="5">
    <location>
        <begin position="313"/>
        <end position="348"/>
    </location>
</feature>
<feature type="compositionally biased region" description="Basic and acidic residues" evidence="5">
    <location>
        <begin position="1"/>
        <end position="14"/>
    </location>
</feature>
<feature type="compositionally biased region" description="Polar residues" evidence="5">
    <location>
        <begin position="89"/>
        <end position="103"/>
    </location>
</feature>
<feature type="compositionally biased region" description="Polar residues" evidence="5">
    <location>
        <begin position="132"/>
        <end position="151"/>
    </location>
</feature>
<feature type="compositionally biased region" description="Polar residues" evidence="5">
    <location>
        <begin position="226"/>
        <end position="236"/>
    </location>
</feature>
<feature type="compositionally biased region" description="Low complexity" evidence="5">
    <location>
        <begin position="313"/>
        <end position="330"/>
    </location>
</feature>
<feature type="modified residue" description="N6-acetyllysine" evidence="2">
    <location>
        <position position="8"/>
    </location>
</feature>
<feature type="modified residue" description="Phosphoserine" evidence="3">
    <location>
        <position position="52"/>
    </location>
</feature>
<feature type="modified residue" description="N6-acetyllysine" evidence="3">
    <location>
        <position position="83"/>
    </location>
</feature>
<feature type="modified residue" description="N6-acetyllysine" evidence="2">
    <location>
        <position position="127"/>
    </location>
</feature>
<feature type="modified residue" description="Phosphoserine" evidence="3">
    <location>
        <position position="209"/>
    </location>
</feature>
<feature type="modified residue" description="Phosphoserine" evidence="2">
    <location>
        <position position="235"/>
    </location>
</feature>
<feature type="modified residue" description="Phosphothreonine" evidence="3">
    <location>
        <position position="247"/>
    </location>
</feature>
<feature type="modified residue" description="Phosphoserine" evidence="3">
    <location>
        <position position="269"/>
    </location>
</feature>
<feature type="modified residue" description="Phosphoserine" evidence="3">
    <location>
        <position position="295"/>
    </location>
</feature>
<feature type="modified residue" description="N6-acetyllysine" evidence="2">
    <location>
        <position position="449"/>
    </location>
</feature>
<feature type="cross-link" description="Glycyl lysine isopeptide (Lys-Gly) (interchain with G-Cter in SUMO2)" evidence="3">
    <location>
        <position position="352"/>
    </location>
</feature>
<feature type="sequence conflict" description="In Ref. 2; AAH97337." evidence="8" ref="2">
    <original>R</original>
    <variation>S</variation>
    <location>
        <position position="211"/>
    </location>
</feature>
<feature type="sequence conflict" description="In Ref. 2; AAH97337." evidence="8" ref="2">
    <original>V</original>
    <variation>A</variation>
    <location>
        <position position="346"/>
    </location>
</feature>
<keyword id="KW-0007">Acetylation</keyword>
<keyword id="KW-1017">Isopeptide bond</keyword>
<keyword id="KW-0472">Membrane</keyword>
<keyword id="KW-0509">mRNA transport</keyword>
<keyword id="KW-0906">Nuclear pore complex</keyword>
<keyword id="KW-0539">Nucleus</keyword>
<keyword id="KW-0597">Phosphoprotein</keyword>
<keyword id="KW-0653">Protein transport</keyword>
<keyword id="KW-1185">Reference proteome</keyword>
<keyword id="KW-0677">Repeat</keyword>
<keyword id="KW-0811">Translocation</keyword>
<keyword id="KW-0813">Transport</keyword>
<keyword id="KW-0832">Ubl conjugation</keyword>
<gene>
    <name type="primary">Nup50</name>
    <name type="synonym">Npap60</name>
</gene>
<protein>
    <recommendedName>
        <fullName>Nuclear pore complex protein Nup50</fullName>
    </recommendedName>
    <alternativeName>
        <fullName>50 kDa nucleoporin</fullName>
    </alternativeName>
    <alternativeName>
        <fullName>Nuclear pore-associated protein 60 kDa-like</fullName>
    </alternativeName>
    <alternativeName>
        <fullName>Nucleoporin Nup50</fullName>
    </alternativeName>
</protein>
<comment type="function">
    <text evidence="2">Component of the nuclear pore complex that has a direct role in nuclear protein import. Actively displaces NLSs from importin-alpha, and facilitates disassembly of the importin-alpha:beta-cargo complex and importin recycling. Interacts with regulatory proteins of cell cycle progression including CDKN1B. This interaction is required for correct intracellular transport and degradation of CDKN1B.</text>
</comment>
<comment type="subunit">
    <text evidence="1">Does not interact with TPR (By similarity). Interacts with Importin alpha-2, Importin beta, Importin beta-2, NUP153, Ran binding protein 7, CDKN1B and itself.</text>
</comment>
<comment type="subcellular location">
    <subcellularLocation>
        <location evidence="6">Nucleus</location>
        <location evidence="6">Nuclear pore complex</location>
    </subcellularLocation>
    <subcellularLocation>
        <location evidence="6">Nucleus membrane</location>
        <topology evidence="6">Peripheral membrane protein</topology>
        <orientation evidence="6">Nucleoplasmic side</orientation>
    </subcellularLocation>
    <text evidence="3 6 7">Dissociates from the NPC structure early during prophase of mitosis (By similarity). Associates with the newly formed nuclear membrane during telophase (By similarity). Localizes to the nucleoplasmic fibrils of the nuclear pore complex (PubMed:10891499). In the testis, the localization changes during germ cell differentiation from the nuclear surface in spermatocytes to the whole nucleus (interior) in spermatids and back to the nuclear surface in spermatozoa (PubMed:9073512).</text>
</comment>
<comment type="tissue specificity">
    <text>Highly expressed in testis, intermediate levels in kidney, liver, spleen and low basal levels in somatic cells. Expression in testis undergoes changes and subcellular localization during germ cell differentiation.</text>
</comment>
<comment type="domain">
    <text evidence="8">Contains FG repeats. FG repeats are interaction sites for karyopherins (importins, exportins) and form probably an affinity gradient, guiding the transport proteins unidirectionally with their cargo through the NPC. FG repeat regions are highly flexible and lack ordered secondary structure. The overall conservation of FG repeats regarding exact sequence, spacing, and repeat unit length is limited.</text>
</comment>
<sequence>MAKRVAEKELTDRNWDEEDEVEEMGTFSVASEEVMKNRAVKKAKRRNIGFESDSGGAFKGFKGLVVPSGGGGFSGFGGGSGGKPLEGLTNGNSTDSATPFSSAKTAAEPKAAFGSFAVNGPTTLVDKKISSPKCNSSNQPPSSGPASSTSCTGNTYHKQLAGLNCSVRDWIVKHVNTNPLCDLTPIFKDYERYLATIEKQLENGGSSSSERQTDRATAAMEPPSLFGSTKLQQDSPFSFHGNKAEDTSEKLEFTAEKKSDAAQGATSASFNFGKKIESSVLGSLSSGSLTGFSFSPGNSSLFGKDAAQSKAASSPFSAKASESQAGGSSSECRDGEEEESDEPPKVVVTEVKEEDAFYSKKCKLFYKKDNEFKEKGVGTLHLKPTATQKTQLLVRADTNLGNILLNVLIPPNMPCTRTGKNNVLIVCVPNPPLDEKQPTLPVTMLIRVKTSEDADELHKILLQKKDV</sequence>
<accession>O08587</accession>
<accession>Q4QR93</accession>